<accession>A7M907</accession>
<comment type="function">
    <text evidence="2">Component of the acetyl coenzyme A carboxylase (ACC) complex. Biotin carboxylase (BC) catalyzes the carboxylation of biotin on its carrier protein (BCCP) and then the CO(2) group is transferred by the transcarboxylase to acetyl-CoA to form malonyl-CoA.</text>
</comment>
<comment type="catalytic activity">
    <reaction evidence="2">
        <text>N(6)-carboxybiotinyl-L-lysyl-[protein] + acetyl-CoA = N(6)-biotinyl-L-lysyl-[protein] + malonyl-CoA</text>
        <dbReference type="Rhea" id="RHEA:54728"/>
        <dbReference type="Rhea" id="RHEA-COMP:10505"/>
        <dbReference type="Rhea" id="RHEA-COMP:10506"/>
        <dbReference type="ChEBI" id="CHEBI:57288"/>
        <dbReference type="ChEBI" id="CHEBI:57384"/>
        <dbReference type="ChEBI" id="CHEBI:83144"/>
        <dbReference type="ChEBI" id="CHEBI:83145"/>
        <dbReference type="EC" id="2.1.3.15"/>
    </reaction>
</comment>
<comment type="cofactor">
    <cofactor evidence="2">
        <name>Zn(2+)</name>
        <dbReference type="ChEBI" id="CHEBI:29105"/>
    </cofactor>
    <text evidence="2">Binds 1 zinc ion per subunit.</text>
</comment>
<comment type="pathway">
    <text evidence="2">Lipid metabolism; malonyl-CoA biosynthesis; malonyl-CoA from acetyl-CoA: step 1/1.</text>
</comment>
<comment type="subunit">
    <text evidence="1">Acetyl-CoA carboxylase is a heterohexamer composed of biotin carboxyl carrier protein, biotin carboxylase and 2 subunits each of ACCase subunit alpha and ACCase plastid-coded subunit beta (accD).</text>
</comment>
<comment type="subcellular location">
    <subcellularLocation>
        <location>Plastid</location>
    </subcellularLocation>
</comment>
<comment type="similarity">
    <text evidence="2">Belongs to the AccD/PCCB family.</text>
</comment>
<comment type="caution">
    <text evidence="5">Young tissue from this organism is photosynthetic and contains some thylakoids, although the photosynthetic activity does not exceed the light compensation point.</text>
</comment>
<dbReference type="EC" id="2.1.3.15" evidence="2"/>
<dbReference type="EMBL" id="AM711639">
    <property type="protein sequence ID" value="CAM98335.1"/>
    <property type="molecule type" value="Genomic_DNA"/>
</dbReference>
<dbReference type="RefSeq" id="YP_001430049.1">
    <property type="nucleotide sequence ID" value="NC_009765.1"/>
</dbReference>
<dbReference type="SMR" id="A7M907"/>
<dbReference type="GeneID" id="5536758"/>
<dbReference type="UniPathway" id="UPA00655">
    <property type="reaction ID" value="UER00711"/>
</dbReference>
<dbReference type="GO" id="GO:0009317">
    <property type="term" value="C:acetyl-CoA carboxylase complex"/>
    <property type="evidence" value="ECO:0007669"/>
    <property type="project" value="InterPro"/>
</dbReference>
<dbReference type="GO" id="GO:0009507">
    <property type="term" value="C:chloroplast"/>
    <property type="evidence" value="ECO:0007669"/>
    <property type="project" value="TreeGrafter"/>
</dbReference>
<dbReference type="GO" id="GO:0003989">
    <property type="term" value="F:acetyl-CoA carboxylase activity"/>
    <property type="evidence" value="ECO:0007669"/>
    <property type="project" value="InterPro"/>
</dbReference>
<dbReference type="GO" id="GO:0005524">
    <property type="term" value="F:ATP binding"/>
    <property type="evidence" value="ECO:0007669"/>
    <property type="project" value="UniProtKB-KW"/>
</dbReference>
<dbReference type="GO" id="GO:0016743">
    <property type="term" value="F:carboxyl- or carbamoyltransferase activity"/>
    <property type="evidence" value="ECO:0007669"/>
    <property type="project" value="UniProtKB-UniRule"/>
</dbReference>
<dbReference type="GO" id="GO:0008270">
    <property type="term" value="F:zinc ion binding"/>
    <property type="evidence" value="ECO:0007669"/>
    <property type="project" value="UniProtKB-UniRule"/>
</dbReference>
<dbReference type="GO" id="GO:0006633">
    <property type="term" value="P:fatty acid biosynthetic process"/>
    <property type="evidence" value="ECO:0007669"/>
    <property type="project" value="UniProtKB-KW"/>
</dbReference>
<dbReference type="GO" id="GO:2001295">
    <property type="term" value="P:malonyl-CoA biosynthetic process"/>
    <property type="evidence" value="ECO:0007669"/>
    <property type="project" value="UniProtKB-UniRule"/>
</dbReference>
<dbReference type="Gene3D" id="3.90.226.10">
    <property type="entry name" value="2-enoyl-CoA Hydratase, Chain A, domain 1"/>
    <property type="match status" value="1"/>
</dbReference>
<dbReference type="HAMAP" id="MF_01395">
    <property type="entry name" value="AcetylCoA_CT_beta"/>
    <property type="match status" value="1"/>
</dbReference>
<dbReference type="InterPro" id="IPR034733">
    <property type="entry name" value="AcCoA_carboxyl_beta"/>
</dbReference>
<dbReference type="InterPro" id="IPR000438">
    <property type="entry name" value="Acetyl_CoA_COase_Trfase_b_su"/>
</dbReference>
<dbReference type="InterPro" id="IPR029045">
    <property type="entry name" value="ClpP/crotonase-like_dom_sf"/>
</dbReference>
<dbReference type="InterPro" id="IPR011762">
    <property type="entry name" value="COA_CT_N"/>
</dbReference>
<dbReference type="PANTHER" id="PTHR42995">
    <property type="entry name" value="ACETYL-COENZYME A CARBOXYLASE CARBOXYL TRANSFERASE SUBUNIT BETA, CHLOROPLASTIC"/>
    <property type="match status" value="1"/>
</dbReference>
<dbReference type="PANTHER" id="PTHR42995:SF5">
    <property type="entry name" value="ACETYL-COENZYME A CARBOXYLASE CARBOXYL TRANSFERASE SUBUNIT BETA, CHLOROPLASTIC"/>
    <property type="match status" value="1"/>
</dbReference>
<dbReference type="Pfam" id="PF01039">
    <property type="entry name" value="Carboxyl_trans"/>
    <property type="match status" value="1"/>
</dbReference>
<dbReference type="PRINTS" id="PR01070">
    <property type="entry name" value="ACCCTRFRASEB"/>
</dbReference>
<dbReference type="SUPFAM" id="SSF52096">
    <property type="entry name" value="ClpP/crotonase"/>
    <property type="match status" value="2"/>
</dbReference>
<dbReference type="PROSITE" id="PS50980">
    <property type="entry name" value="COA_CT_NTER"/>
    <property type="match status" value="1"/>
</dbReference>
<organism>
    <name type="scientific">Cuscuta gronovii</name>
    <name type="common">Common dodder</name>
    <name type="synonym">Epithymum gronovii</name>
    <dbReference type="NCBI Taxonomy" id="35886"/>
    <lineage>
        <taxon>Eukaryota</taxon>
        <taxon>Viridiplantae</taxon>
        <taxon>Streptophyta</taxon>
        <taxon>Embryophyta</taxon>
        <taxon>Tracheophyta</taxon>
        <taxon>Spermatophyta</taxon>
        <taxon>Magnoliopsida</taxon>
        <taxon>eudicotyledons</taxon>
        <taxon>Gunneridae</taxon>
        <taxon>Pentapetalae</taxon>
        <taxon>asterids</taxon>
        <taxon>lamiids</taxon>
        <taxon>Solanales</taxon>
        <taxon>Convolvulaceae</taxon>
        <taxon>Cuscuteae</taxon>
        <taxon>Cuscuta</taxon>
        <taxon>Cuscuta subgen. Grammica</taxon>
        <taxon>Cuscuta sect. Oxycarpae</taxon>
    </lineage>
</organism>
<evidence type="ECO:0000250" key="1"/>
<evidence type="ECO:0000255" key="2">
    <source>
        <dbReference type="HAMAP-Rule" id="MF_01395"/>
    </source>
</evidence>
<evidence type="ECO:0000255" key="3">
    <source>
        <dbReference type="PROSITE-ProRule" id="PRU01136"/>
    </source>
</evidence>
<evidence type="ECO:0000256" key="4">
    <source>
        <dbReference type="SAM" id="MobiDB-lite"/>
    </source>
</evidence>
<evidence type="ECO:0000305" key="5"/>
<reference key="1">
    <citation type="journal article" date="2007" name="BMC Plant Biol.">
        <title>Complete DNA sequences of the plastid genomes of two parasitic flowering plant species, Cuscuta reflexa and Cuscuta gronovii.</title>
        <authorList>
            <person name="Funk H.T."/>
            <person name="Berg S."/>
            <person name="Krupinska K."/>
            <person name="Maier U.-G."/>
            <person name="Krause K."/>
        </authorList>
    </citation>
    <scope>NUCLEOTIDE SEQUENCE [LARGE SCALE GENOMIC DNA]</scope>
    <scope>ABSENCE OF RNA EDITING</scope>
</reference>
<geneLocation type="plastid"/>
<name>ACCD_CUSGR</name>
<proteinExistence type="evidence at transcript level"/>
<protein>
    <recommendedName>
        <fullName evidence="2">Acetyl-coenzyme A carboxylase carboxyl transferase subunit beta</fullName>
        <shortName evidence="2">ACCase subunit beta</shortName>
        <shortName evidence="2">Acetyl-CoA carboxylase carboxyltransferase subunit beta</shortName>
        <ecNumber evidence="2">2.1.3.15</ecNumber>
    </recommendedName>
</protein>
<sequence length="491" mass="56198">MQNWIDNSFQAEFEQESYFGSLGENSTNPSSGGDRYPEALIIRDITGKTSAIYFDITDDILENDPHQTILLSPIENDIWTEKDVIIDTYRYINELIFCDEKSQQKQKDRTEFIKKEQLQLISNRNPDHYRNLWNQCENCFIPNYKKVLKSNMQICEECGSYFKMTSSDRIDLLIDEGTWNPLDQDMVSLDSSEFDSEAELECYEDNIKEWNEEMCQAFMRKLSKDLKEGQALERTANLIEEPWLPEYIQPEEKVEEWTKPDLDEGEESQDEERWIWELDKGEESQEIEDSEANDEDDDDAPYVERLAFYKKETGLLDAVQTGVGQLNGRPVALGVMDFRFLAGSMGCVVGEKITRLIEYATNNLLPLIILSASGGARVHEGSLSLMQMAKISAALYDYQSNKRLFYISILTSPTTGGVTASFAMLGDIIITEPGTFVAFAGPRVVQQILNETIPEEEQEAEALFEKGFFDLIVPRHLLKNVISELLNLHAL</sequence>
<feature type="chain" id="PRO_0000308482" description="Acetyl-coenzyme A carboxylase carboxyl transferase subunit beta">
    <location>
        <begin position="1"/>
        <end position="491"/>
    </location>
</feature>
<feature type="domain" description="CoA carboxyltransferase N-terminal" evidence="3">
    <location>
        <begin position="132"/>
        <end position="491"/>
    </location>
</feature>
<feature type="zinc finger region" description="C4-type" evidence="2">
    <location>
        <begin position="136"/>
        <end position="158"/>
    </location>
</feature>
<feature type="region of interest" description="Disordered" evidence="4">
    <location>
        <begin position="252"/>
        <end position="273"/>
    </location>
</feature>
<feature type="region of interest" description="Disordered" evidence="4">
    <location>
        <begin position="279"/>
        <end position="298"/>
    </location>
</feature>
<feature type="compositionally biased region" description="Basic and acidic residues" evidence="4">
    <location>
        <begin position="252"/>
        <end position="262"/>
    </location>
</feature>
<feature type="compositionally biased region" description="Acidic residues" evidence="4">
    <location>
        <begin position="284"/>
        <end position="298"/>
    </location>
</feature>
<feature type="binding site" evidence="2">
    <location>
        <position position="136"/>
    </location>
    <ligand>
        <name>Zn(2+)</name>
        <dbReference type="ChEBI" id="CHEBI:29105"/>
    </ligand>
</feature>
<feature type="binding site" evidence="2">
    <location>
        <position position="139"/>
    </location>
    <ligand>
        <name>Zn(2+)</name>
        <dbReference type="ChEBI" id="CHEBI:29105"/>
    </ligand>
</feature>
<feature type="binding site" evidence="2">
    <location>
        <position position="155"/>
    </location>
    <ligand>
        <name>Zn(2+)</name>
        <dbReference type="ChEBI" id="CHEBI:29105"/>
    </ligand>
</feature>
<feature type="binding site" evidence="2">
    <location>
        <position position="158"/>
    </location>
    <ligand>
        <name>Zn(2+)</name>
        <dbReference type="ChEBI" id="CHEBI:29105"/>
    </ligand>
</feature>
<gene>
    <name evidence="2" type="primary">accD</name>
</gene>
<keyword id="KW-0067">ATP-binding</keyword>
<keyword id="KW-0275">Fatty acid biosynthesis</keyword>
<keyword id="KW-0276">Fatty acid metabolism</keyword>
<keyword id="KW-0444">Lipid biosynthesis</keyword>
<keyword id="KW-0443">Lipid metabolism</keyword>
<keyword id="KW-0479">Metal-binding</keyword>
<keyword id="KW-0547">Nucleotide-binding</keyword>
<keyword id="KW-0934">Plastid</keyword>
<keyword id="KW-0808">Transferase</keyword>
<keyword id="KW-0862">Zinc</keyword>
<keyword id="KW-0863">Zinc-finger</keyword>